<proteinExistence type="inferred from homology"/>
<comment type="subunit">
    <text evidence="1">May form a heterooligomeric complex that consists of seven subunits: mnhA2, mnhB2, mnhC2, mnhD2, mnhE2, mnhF2 and mnhG2.</text>
</comment>
<comment type="subcellular location">
    <subcellularLocation>
        <location evidence="3">Cell membrane</location>
        <topology evidence="3">Multi-pass membrane protein</topology>
    </subcellularLocation>
</comment>
<comment type="similarity">
    <text evidence="3">Belongs to the CPA3 antiporters (TC 2.A.63) subunit C family.</text>
</comment>
<reference key="1">
    <citation type="journal article" date="2001" name="Lancet">
        <title>Whole genome sequencing of meticillin-resistant Staphylococcus aureus.</title>
        <authorList>
            <person name="Kuroda M."/>
            <person name="Ohta T."/>
            <person name="Uchiyama I."/>
            <person name="Baba T."/>
            <person name="Yuzawa H."/>
            <person name="Kobayashi I."/>
            <person name="Cui L."/>
            <person name="Oguchi A."/>
            <person name="Aoki K."/>
            <person name="Nagai Y."/>
            <person name="Lian J.-Q."/>
            <person name="Ito T."/>
            <person name="Kanamori M."/>
            <person name="Matsumaru H."/>
            <person name="Maruyama A."/>
            <person name="Murakami H."/>
            <person name="Hosoyama A."/>
            <person name="Mizutani-Ui Y."/>
            <person name="Takahashi N.K."/>
            <person name="Sawano T."/>
            <person name="Inoue R."/>
            <person name="Kaito C."/>
            <person name="Sekimizu K."/>
            <person name="Hirakawa H."/>
            <person name="Kuhara S."/>
            <person name="Goto S."/>
            <person name="Yabuzaki J."/>
            <person name="Kanehisa M."/>
            <person name="Yamashita A."/>
            <person name="Oshima K."/>
            <person name="Furuya K."/>
            <person name="Yoshino C."/>
            <person name="Shiba T."/>
            <person name="Hattori M."/>
            <person name="Ogasawara N."/>
            <person name="Hayashi H."/>
            <person name="Hiramatsu K."/>
        </authorList>
    </citation>
    <scope>NUCLEOTIDE SEQUENCE [LARGE SCALE GENOMIC DNA]</scope>
    <source>
        <strain>Mu50 / ATCC 700699</strain>
    </source>
</reference>
<protein>
    <recommendedName>
        <fullName>Putative antiporter subunit mnhC2</fullName>
    </recommendedName>
    <alternativeName>
        <fullName>Mrp complex subunit C2</fullName>
    </alternativeName>
    <alternativeName>
        <fullName>Putative NADH-ubiquinone oxidoreductase subunit mnhC2</fullName>
    </alternativeName>
</protein>
<dbReference type="EMBL" id="BA000017">
    <property type="protein sequence ID" value="BAB56786.1"/>
    <property type="molecule type" value="Genomic_DNA"/>
</dbReference>
<dbReference type="RefSeq" id="WP_001048985.1">
    <property type="nucleotide sequence ID" value="NC_002758.2"/>
</dbReference>
<dbReference type="SMR" id="Q99VZ0"/>
<dbReference type="KEGG" id="sav:SAV0624"/>
<dbReference type="HOGENOM" id="CLU_082058_3_1_9"/>
<dbReference type="PhylomeDB" id="Q99VZ0"/>
<dbReference type="Proteomes" id="UP000002481">
    <property type="component" value="Chromosome"/>
</dbReference>
<dbReference type="GO" id="GO:0005886">
    <property type="term" value="C:plasma membrane"/>
    <property type="evidence" value="ECO:0007669"/>
    <property type="project" value="UniProtKB-SubCell"/>
</dbReference>
<dbReference type="GO" id="GO:0015297">
    <property type="term" value="F:antiporter activity"/>
    <property type="evidence" value="ECO:0007669"/>
    <property type="project" value="UniProtKB-KW"/>
</dbReference>
<dbReference type="GO" id="GO:0006811">
    <property type="term" value="P:monoatomic ion transport"/>
    <property type="evidence" value="ECO:0007669"/>
    <property type="project" value="UniProtKB-KW"/>
</dbReference>
<dbReference type="Gene3D" id="1.10.287.3510">
    <property type="match status" value="1"/>
</dbReference>
<dbReference type="InterPro" id="IPR050601">
    <property type="entry name" value="CPA3_antiporter_subunitC"/>
</dbReference>
<dbReference type="InterPro" id="IPR039428">
    <property type="entry name" value="NUOK/Mnh_C1-like"/>
</dbReference>
<dbReference type="NCBIfam" id="NF009303">
    <property type="entry name" value="PRK12660.1"/>
    <property type="match status" value="1"/>
</dbReference>
<dbReference type="PANTHER" id="PTHR34583">
    <property type="entry name" value="ANTIPORTER SUBUNIT MNHC2-RELATED"/>
    <property type="match status" value="1"/>
</dbReference>
<dbReference type="PANTHER" id="PTHR34583:SF2">
    <property type="entry name" value="ANTIPORTER SUBUNIT MNHC2-RELATED"/>
    <property type="match status" value="1"/>
</dbReference>
<dbReference type="Pfam" id="PF00420">
    <property type="entry name" value="Oxidored_q2"/>
    <property type="match status" value="1"/>
</dbReference>
<evidence type="ECO:0000250" key="1"/>
<evidence type="ECO:0000255" key="2"/>
<evidence type="ECO:0000305" key="3"/>
<accession>Q99VZ0</accession>
<organism>
    <name type="scientific">Staphylococcus aureus (strain Mu50 / ATCC 700699)</name>
    <dbReference type="NCBI Taxonomy" id="158878"/>
    <lineage>
        <taxon>Bacteria</taxon>
        <taxon>Bacillati</taxon>
        <taxon>Bacillota</taxon>
        <taxon>Bacilli</taxon>
        <taxon>Bacillales</taxon>
        <taxon>Staphylococcaceae</taxon>
        <taxon>Staphylococcus</taxon>
    </lineage>
</organism>
<sequence>MNLILLLVIGFLVFIGTYMILSINLIRIVIGISIYTHAGNLIIMSMGTYGSSRSEPLITGGNQLFVDPLLQAIVLTAIVIGFGMTAFLLVLVYRTYKVTKEDEIEGLRGEDDAK</sequence>
<gene>
    <name type="primary">mnhC2</name>
    <name type="synonym">mrpC2</name>
    <name type="ordered locus">SAV0624</name>
</gene>
<feature type="chain" id="PRO_0000372255" description="Putative antiporter subunit mnhC2">
    <location>
        <begin position="1"/>
        <end position="114"/>
    </location>
</feature>
<feature type="transmembrane region" description="Helical" evidence="2">
    <location>
        <begin position="3"/>
        <end position="23"/>
    </location>
</feature>
<feature type="transmembrane region" description="Helical" evidence="2">
    <location>
        <begin position="28"/>
        <end position="48"/>
    </location>
</feature>
<feature type="transmembrane region" description="Helical" evidence="2">
    <location>
        <begin position="72"/>
        <end position="92"/>
    </location>
</feature>
<keyword id="KW-0050">Antiport</keyword>
<keyword id="KW-1003">Cell membrane</keyword>
<keyword id="KW-0406">Ion transport</keyword>
<keyword id="KW-0472">Membrane</keyword>
<keyword id="KW-0812">Transmembrane</keyword>
<keyword id="KW-1133">Transmembrane helix</keyword>
<keyword id="KW-0813">Transport</keyword>
<name>MNHC2_STAAM</name>